<keyword id="KW-0028">Amino-acid biosynthesis</keyword>
<keyword id="KW-0963">Cytoplasm</keyword>
<keyword id="KW-0315">Glutamine amidotransferase</keyword>
<keyword id="KW-0368">Histidine biosynthesis</keyword>
<keyword id="KW-0378">Hydrolase</keyword>
<keyword id="KW-0456">Lyase</keyword>
<protein>
    <recommendedName>
        <fullName evidence="1">Imidazole glycerol phosphate synthase subunit HisH</fullName>
        <ecNumber evidence="1">4.3.2.10</ecNumber>
    </recommendedName>
    <alternativeName>
        <fullName evidence="1">IGP synthase glutaminase subunit</fullName>
        <ecNumber evidence="1">3.5.1.2</ecNumber>
    </alternativeName>
    <alternativeName>
        <fullName evidence="1">IGP synthase subunit HisH</fullName>
    </alternativeName>
    <alternativeName>
        <fullName evidence="1">ImGP synthase subunit HisH</fullName>
        <shortName evidence="1">IGPS subunit HisH</shortName>
    </alternativeName>
</protein>
<organism>
    <name type="scientific">Colwellia psychrerythraea (strain 34H / ATCC BAA-681)</name>
    <name type="common">Vibrio psychroerythus</name>
    <dbReference type="NCBI Taxonomy" id="167879"/>
    <lineage>
        <taxon>Bacteria</taxon>
        <taxon>Pseudomonadati</taxon>
        <taxon>Pseudomonadota</taxon>
        <taxon>Gammaproteobacteria</taxon>
        <taxon>Alteromonadales</taxon>
        <taxon>Colwelliaceae</taxon>
        <taxon>Colwellia</taxon>
    </lineage>
</organism>
<feature type="chain" id="PRO_0000231717" description="Imidazole glycerol phosphate synthase subunit HisH">
    <location>
        <begin position="1"/>
        <end position="225"/>
    </location>
</feature>
<feature type="domain" description="Glutamine amidotransferase type-1" evidence="1">
    <location>
        <begin position="5"/>
        <end position="220"/>
    </location>
</feature>
<feature type="active site" description="Nucleophile" evidence="1">
    <location>
        <position position="80"/>
    </location>
</feature>
<feature type="active site" evidence="1">
    <location>
        <position position="195"/>
    </location>
</feature>
<feature type="active site" evidence="1">
    <location>
        <position position="197"/>
    </location>
</feature>
<reference key="1">
    <citation type="journal article" date="2005" name="Proc. Natl. Acad. Sci. U.S.A.">
        <title>The psychrophilic lifestyle as revealed by the genome sequence of Colwellia psychrerythraea 34H through genomic and proteomic analyses.</title>
        <authorList>
            <person name="Methe B.A."/>
            <person name="Nelson K.E."/>
            <person name="Deming J.W."/>
            <person name="Momen B."/>
            <person name="Melamud E."/>
            <person name="Zhang X."/>
            <person name="Moult J."/>
            <person name="Madupu R."/>
            <person name="Nelson W.C."/>
            <person name="Dodson R.J."/>
            <person name="Brinkac L.M."/>
            <person name="Daugherty S.C."/>
            <person name="Durkin A.S."/>
            <person name="DeBoy R.T."/>
            <person name="Kolonay J.F."/>
            <person name="Sullivan S.A."/>
            <person name="Zhou L."/>
            <person name="Davidsen T.M."/>
            <person name="Wu M."/>
            <person name="Huston A.L."/>
            <person name="Lewis M."/>
            <person name="Weaver B."/>
            <person name="Weidman J.F."/>
            <person name="Khouri H."/>
            <person name="Utterback T.R."/>
            <person name="Feldblyum T.V."/>
            <person name="Fraser C.M."/>
        </authorList>
    </citation>
    <scope>NUCLEOTIDE SEQUENCE [LARGE SCALE GENOMIC DNA]</scope>
    <source>
        <strain>34H / ATCC BAA-681</strain>
    </source>
</reference>
<evidence type="ECO:0000255" key="1">
    <source>
        <dbReference type="HAMAP-Rule" id="MF_00278"/>
    </source>
</evidence>
<dbReference type="EC" id="4.3.2.10" evidence="1"/>
<dbReference type="EC" id="3.5.1.2" evidence="1"/>
<dbReference type="EMBL" id="CP000083">
    <property type="protein sequence ID" value="AAZ28140.1"/>
    <property type="molecule type" value="Genomic_DNA"/>
</dbReference>
<dbReference type="RefSeq" id="WP_011044641.1">
    <property type="nucleotide sequence ID" value="NC_003910.7"/>
</dbReference>
<dbReference type="SMR" id="Q47XB5"/>
<dbReference type="STRING" id="167879.CPS_3893"/>
<dbReference type="KEGG" id="cps:CPS_3893"/>
<dbReference type="eggNOG" id="COG0118">
    <property type="taxonomic scope" value="Bacteria"/>
</dbReference>
<dbReference type="HOGENOM" id="CLU_071837_0_0_6"/>
<dbReference type="UniPathway" id="UPA00031">
    <property type="reaction ID" value="UER00010"/>
</dbReference>
<dbReference type="Proteomes" id="UP000000547">
    <property type="component" value="Chromosome"/>
</dbReference>
<dbReference type="GO" id="GO:0005737">
    <property type="term" value="C:cytoplasm"/>
    <property type="evidence" value="ECO:0007669"/>
    <property type="project" value="UniProtKB-SubCell"/>
</dbReference>
<dbReference type="GO" id="GO:0004359">
    <property type="term" value="F:glutaminase activity"/>
    <property type="evidence" value="ECO:0007669"/>
    <property type="project" value="UniProtKB-EC"/>
</dbReference>
<dbReference type="GO" id="GO:0000107">
    <property type="term" value="F:imidazoleglycerol-phosphate synthase activity"/>
    <property type="evidence" value="ECO:0007669"/>
    <property type="project" value="UniProtKB-UniRule"/>
</dbReference>
<dbReference type="GO" id="GO:0016829">
    <property type="term" value="F:lyase activity"/>
    <property type="evidence" value="ECO:0007669"/>
    <property type="project" value="UniProtKB-KW"/>
</dbReference>
<dbReference type="GO" id="GO:0000105">
    <property type="term" value="P:L-histidine biosynthetic process"/>
    <property type="evidence" value="ECO:0007669"/>
    <property type="project" value="UniProtKB-UniRule"/>
</dbReference>
<dbReference type="CDD" id="cd01748">
    <property type="entry name" value="GATase1_IGP_Synthase"/>
    <property type="match status" value="1"/>
</dbReference>
<dbReference type="FunFam" id="3.40.50.880:FF:000009">
    <property type="entry name" value="Imidazole glycerol phosphate synthase subunit HisH"/>
    <property type="match status" value="1"/>
</dbReference>
<dbReference type="Gene3D" id="3.40.50.880">
    <property type="match status" value="1"/>
</dbReference>
<dbReference type="HAMAP" id="MF_00278">
    <property type="entry name" value="HisH"/>
    <property type="match status" value="1"/>
</dbReference>
<dbReference type="InterPro" id="IPR029062">
    <property type="entry name" value="Class_I_gatase-like"/>
</dbReference>
<dbReference type="InterPro" id="IPR017926">
    <property type="entry name" value="GATASE"/>
</dbReference>
<dbReference type="InterPro" id="IPR010139">
    <property type="entry name" value="Imidazole-glycPsynth_HisH"/>
</dbReference>
<dbReference type="NCBIfam" id="TIGR01855">
    <property type="entry name" value="IMP_synth_hisH"/>
    <property type="match status" value="1"/>
</dbReference>
<dbReference type="PANTHER" id="PTHR42701">
    <property type="entry name" value="IMIDAZOLE GLYCEROL PHOSPHATE SYNTHASE SUBUNIT HISH"/>
    <property type="match status" value="1"/>
</dbReference>
<dbReference type="PANTHER" id="PTHR42701:SF1">
    <property type="entry name" value="IMIDAZOLE GLYCEROL PHOSPHATE SYNTHASE SUBUNIT HISH"/>
    <property type="match status" value="1"/>
</dbReference>
<dbReference type="Pfam" id="PF00117">
    <property type="entry name" value="GATase"/>
    <property type="match status" value="1"/>
</dbReference>
<dbReference type="PIRSF" id="PIRSF000495">
    <property type="entry name" value="Amidotransf_hisH"/>
    <property type="match status" value="1"/>
</dbReference>
<dbReference type="SUPFAM" id="SSF52317">
    <property type="entry name" value="Class I glutamine amidotransferase-like"/>
    <property type="match status" value="1"/>
</dbReference>
<dbReference type="PROSITE" id="PS51273">
    <property type="entry name" value="GATASE_TYPE_1"/>
    <property type="match status" value="1"/>
</dbReference>
<name>HIS5_COLP3</name>
<comment type="function">
    <text evidence="1">IGPS catalyzes the conversion of PRFAR and glutamine to IGP, AICAR and glutamate. The HisH subunit catalyzes the hydrolysis of glutamine to glutamate and ammonia as part of the synthesis of IGP and AICAR. The resulting ammonia molecule is channeled to the active site of HisF.</text>
</comment>
<comment type="catalytic activity">
    <reaction evidence="1">
        <text>5-[(5-phospho-1-deoxy-D-ribulos-1-ylimino)methylamino]-1-(5-phospho-beta-D-ribosyl)imidazole-4-carboxamide + L-glutamine = D-erythro-1-(imidazol-4-yl)glycerol 3-phosphate + 5-amino-1-(5-phospho-beta-D-ribosyl)imidazole-4-carboxamide + L-glutamate + H(+)</text>
        <dbReference type="Rhea" id="RHEA:24793"/>
        <dbReference type="ChEBI" id="CHEBI:15378"/>
        <dbReference type="ChEBI" id="CHEBI:29985"/>
        <dbReference type="ChEBI" id="CHEBI:58278"/>
        <dbReference type="ChEBI" id="CHEBI:58359"/>
        <dbReference type="ChEBI" id="CHEBI:58475"/>
        <dbReference type="ChEBI" id="CHEBI:58525"/>
        <dbReference type="EC" id="4.3.2.10"/>
    </reaction>
</comment>
<comment type="catalytic activity">
    <reaction evidence="1">
        <text>L-glutamine + H2O = L-glutamate + NH4(+)</text>
        <dbReference type="Rhea" id="RHEA:15889"/>
        <dbReference type="ChEBI" id="CHEBI:15377"/>
        <dbReference type="ChEBI" id="CHEBI:28938"/>
        <dbReference type="ChEBI" id="CHEBI:29985"/>
        <dbReference type="ChEBI" id="CHEBI:58359"/>
        <dbReference type="EC" id="3.5.1.2"/>
    </reaction>
</comment>
<comment type="pathway">
    <text evidence="1">Amino-acid biosynthesis; L-histidine biosynthesis; L-histidine from 5-phospho-alpha-D-ribose 1-diphosphate: step 5/9.</text>
</comment>
<comment type="subunit">
    <text evidence="1">Heterodimer of HisH and HisF.</text>
</comment>
<comment type="subcellular location">
    <subcellularLocation>
        <location evidence="1">Cytoplasm</location>
    </subcellularLocation>
</comment>
<proteinExistence type="inferred from homology"/>
<accession>Q47XB5</accession>
<gene>
    <name evidence="1" type="primary">hisH</name>
    <name type="ordered locus">CPS_3893</name>
</gene>
<sequence>MTSAKNVIVDTGCANLSSVKFAVERLGFEVTITDDITIIQQAEKVIFPGVGSAKHAMKNIKAKNLEAALQGLTQPVLGFCLGMQLMTESSTEGKKSSTEGNNDDNTSHIVPCLNLIPTNVEPLKAQGNRLPHMGWNTLTQVSNHPIFKGISEGDYFYFVHSFAAPISEYTIASCEYGSTFSAAIAKDNFIGCQFHPERSSALGSKIIQNFLELDSTELNQELVNL</sequence>